<comment type="function">
    <text evidence="2">Tooth-associated epithelia protein that probably plays a role in odontogenesis, the complex process that results in the initiation and generation of the tooth. May be incorporated in the enamel matrix at the end of mineralization process. Involved in the induction of RHOA activity via interaction with ARHGEF and expression of downstream factors such as ROCK. Plays a role in attachment of the junctional epithelium to the tooth surface.</text>
</comment>
<comment type="subunit">
    <text evidence="2">Interacts (via C-terminus) with ARHGEF5.</text>
</comment>
<comment type="subcellular location">
    <subcellularLocation>
        <location evidence="3">Secreted</location>
    </subcellularLocation>
    <subcellularLocation>
        <location evidence="2">Cytoplasm</location>
    </subcellularLocation>
    <subcellularLocation>
        <location evidence="2">Nucleus</location>
    </subcellularLocation>
</comment>
<comment type="PTM">
    <text evidence="1">O-glycosylated.</text>
</comment>
<comment type="similarity">
    <text evidence="6">Belongs to the ODAM family.</text>
</comment>
<accession>A1YQ94</accession>
<dbReference type="EMBL" id="EF121761">
    <property type="protein sequence ID" value="ABL63511.1"/>
    <property type="molecule type" value="mRNA"/>
</dbReference>
<dbReference type="RefSeq" id="NP_001073385.1">
    <property type="nucleotide sequence ID" value="NM_001079916.1"/>
</dbReference>
<dbReference type="FunCoup" id="A1YQ94">
    <property type="interactions" value="9"/>
</dbReference>
<dbReference type="STRING" id="9598.ENSPTRP00000027726"/>
<dbReference type="GlyCosmos" id="A1YQ94">
    <property type="glycosylation" value="11 sites, No reported glycans"/>
</dbReference>
<dbReference type="PaxDb" id="9598-ENSPTRP00000027726"/>
<dbReference type="GeneID" id="461282"/>
<dbReference type="KEGG" id="ptr:461282"/>
<dbReference type="CTD" id="54959"/>
<dbReference type="eggNOG" id="ENOG502RM1P">
    <property type="taxonomic scope" value="Eukaryota"/>
</dbReference>
<dbReference type="InParanoid" id="A1YQ94"/>
<dbReference type="Proteomes" id="UP000002277">
    <property type="component" value="Unplaced"/>
</dbReference>
<dbReference type="GO" id="GO:0005737">
    <property type="term" value="C:cytoplasm"/>
    <property type="evidence" value="ECO:0000318"/>
    <property type="project" value="GO_Central"/>
</dbReference>
<dbReference type="GO" id="GO:0005576">
    <property type="term" value="C:extracellular region"/>
    <property type="evidence" value="ECO:0007669"/>
    <property type="project" value="UniProtKB-SubCell"/>
</dbReference>
<dbReference type="GO" id="GO:0005634">
    <property type="term" value="C:nucleus"/>
    <property type="evidence" value="ECO:0000318"/>
    <property type="project" value="GO_Central"/>
</dbReference>
<dbReference type="GO" id="GO:0031214">
    <property type="term" value="P:biomineral tissue development"/>
    <property type="evidence" value="ECO:0007669"/>
    <property type="project" value="UniProtKB-KW"/>
</dbReference>
<dbReference type="GO" id="GO:0042475">
    <property type="term" value="P:odontogenesis of dentin-containing tooth"/>
    <property type="evidence" value="ECO:0000318"/>
    <property type="project" value="GO_Central"/>
</dbReference>
<dbReference type="InterPro" id="IPR026802">
    <property type="entry name" value="Odam"/>
</dbReference>
<dbReference type="PANTHER" id="PTHR16237">
    <property type="entry name" value="ODONTOGENIC AMELOBLAST-ASSOCIATED PROTEIN"/>
    <property type="match status" value="1"/>
</dbReference>
<dbReference type="PANTHER" id="PTHR16237:SF3">
    <property type="entry name" value="ODONTOGENIC AMELOBLAST-ASSOCIATED PROTEIN"/>
    <property type="match status" value="1"/>
</dbReference>
<dbReference type="Pfam" id="PF15424">
    <property type="entry name" value="ODAM"/>
    <property type="match status" value="1"/>
</dbReference>
<protein>
    <recommendedName>
        <fullName>Odontogenic ameloblast-associated protein</fullName>
    </recommendedName>
    <alternativeName>
        <fullName>Apin</fullName>
    </alternativeName>
</protein>
<keyword id="KW-0091">Biomineralization</keyword>
<keyword id="KW-0963">Cytoplasm</keyword>
<keyword id="KW-0325">Glycoprotein</keyword>
<keyword id="KW-0539">Nucleus</keyword>
<keyword id="KW-1185">Reference proteome</keyword>
<keyword id="KW-0964">Secreted</keyword>
<keyword id="KW-0732">Signal</keyword>
<sequence length="279" mass="30688">MKIIILLGFLGATLSAPLIPQRLTSASNSNELLLNLNNGQLLPLQLQGPLNSWIPPFSGILQQQQQAQIPGLSQFSLSALDQFAGLLPNQIPFPGQASFAQGAQAGHVDPLQLQTPPQTQPGPSHVMPYVFSFKMPQEQGQMFQYYPVYMLLPWEQPQQTVPRSPQQTRQQQYEEQIPFYAQFGYIPQLAEPATSGGQQQLAFDPQLGTAPEIAVMSTGEEIPYLGKEAINFRHDSAGVFMPSTSPKPSTTNAFTSAVDQTITPELPEEKDKTDSLREP</sequence>
<organism>
    <name type="scientific">Pan troglodytes</name>
    <name type="common">Chimpanzee</name>
    <dbReference type="NCBI Taxonomy" id="9598"/>
    <lineage>
        <taxon>Eukaryota</taxon>
        <taxon>Metazoa</taxon>
        <taxon>Chordata</taxon>
        <taxon>Craniata</taxon>
        <taxon>Vertebrata</taxon>
        <taxon>Euteleostomi</taxon>
        <taxon>Mammalia</taxon>
        <taxon>Eutheria</taxon>
        <taxon>Euarchontoglires</taxon>
        <taxon>Primates</taxon>
        <taxon>Haplorrhini</taxon>
        <taxon>Catarrhini</taxon>
        <taxon>Hominidae</taxon>
        <taxon>Pan</taxon>
    </lineage>
</organism>
<evidence type="ECO:0000250" key="1"/>
<evidence type="ECO:0000250" key="2">
    <source>
        <dbReference type="UniProtKB" id="A1E959"/>
    </source>
</evidence>
<evidence type="ECO:0000250" key="3">
    <source>
        <dbReference type="UniProtKB" id="Q3HS83"/>
    </source>
</evidence>
<evidence type="ECO:0000255" key="4"/>
<evidence type="ECO:0000256" key="5">
    <source>
        <dbReference type="SAM" id="MobiDB-lite"/>
    </source>
</evidence>
<evidence type="ECO:0000305" key="6"/>
<gene>
    <name type="primary">ODAM</name>
    <name type="synonym">APIN</name>
</gene>
<proteinExistence type="evidence at transcript level"/>
<reference key="1">
    <citation type="submission" date="2006-11" db="EMBL/GenBank/DDBJ databases">
        <authorList>
            <person name="Moffatt P."/>
            <person name="Smith C.E."/>
            <person name="Nanci A."/>
        </authorList>
    </citation>
    <scope>NUCLEOTIDE SEQUENCE [MRNA]</scope>
</reference>
<name>ODAM_PANTR</name>
<feature type="signal peptide" evidence="4">
    <location>
        <begin position="1"/>
        <end position="15"/>
    </location>
</feature>
<feature type="chain" id="PRO_5000214106" description="Odontogenic ameloblast-associated protein">
    <location>
        <begin position="16"/>
        <end position="279"/>
    </location>
</feature>
<feature type="region of interest" description="Interaction with ARHGEF5" evidence="2">
    <location>
        <begin position="127"/>
        <end position="129"/>
    </location>
</feature>
<feature type="region of interest" description="Disordered" evidence="5">
    <location>
        <begin position="243"/>
        <end position="279"/>
    </location>
</feature>
<feature type="compositionally biased region" description="Polar residues" evidence="5">
    <location>
        <begin position="243"/>
        <end position="263"/>
    </location>
</feature>
<feature type="compositionally biased region" description="Basic and acidic residues" evidence="5">
    <location>
        <begin position="267"/>
        <end position="279"/>
    </location>
</feature>
<feature type="glycosylation site" description="O-linked (GalNAc...) threonine" evidence="4">
    <location>
        <position position="115"/>
    </location>
</feature>
<feature type="glycosylation site" description="O-linked (GalNAc...) threonine" evidence="4">
    <location>
        <position position="244"/>
    </location>
</feature>
<feature type="glycosylation site" description="O-linked (GalNAc...) serine" evidence="4">
    <location>
        <position position="249"/>
    </location>
</feature>
<feature type="glycosylation site" description="O-linked (GalNAc...) threonine" evidence="4">
    <location>
        <position position="250"/>
    </location>
</feature>
<feature type="glycosylation site" description="O-linked (GalNAc...) threonine" evidence="4">
    <location>
        <position position="251"/>
    </location>
</feature>
<feature type="glycosylation site" description="O-linked (GalNAc...) threonine" evidence="4">
    <location>
        <position position="255"/>
    </location>
</feature>
<feature type="glycosylation site" description="O-linked (GalNAc...) serine" evidence="4">
    <location>
        <position position="256"/>
    </location>
</feature>
<feature type="glycosylation site" description="O-linked (GalNAc...) threonine" evidence="4">
    <location>
        <position position="261"/>
    </location>
</feature>
<feature type="glycosylation site" description="O-linked (GalNAc...) threonine" evidence="4">
    <location>
        <position position="263"/>
    </location>
</feature>
<feature type="glycosylation site" description="O-linked (GalNAc...) threonine" evidence="4">
    <location>
        <position position="273"/>
    </location>
</feature>
<feature type="glycosylation site" description="O-linked (GalNAc...) serine" evidence="4">
    <location>
        <position position="275"/>
    </location>
</feature>